<protein>
    <recommendedName>
        <fullName evidence="1">Shikimate kinase</fullName>
        <shortName evidence="1">SK</shortName>
        <ecNumber evidence="1">2.7.1.71</ecNumber>
    </recommendedName>
</protein>
<dbReference type="EC" id="2.7.1.71" evidence="1"/>
<dbReference type="EMBL" id="AP009484">
    <property type="protein sequence ID" value="BAH17889.1"/>
    <property type="molecule type" value="Genomic_DNA"/>
</dbReference>
<dbReference type="RefSeq" id="WP_012657087.1">
    <property type="nucleotide sequence ID" value="NC_011999.1"/>
</dbReference>
<dbReference type="SMR" id="B9E6S1"/>
<dbReference type="STRING" id="458233.MCCL_1182"/>
<dbReference type="KEGG" id="mcl:MCCL_1182"/>
<dbReference type="eggNOG" id="COG0703">
    <property type="taxonomic scope" value="Bacteria"/>
</dbReference>
<dbReference type="HOGENOM" id="CLU_057607_4_3_9"/>
<dbReference type="OrthoDB" id="9800332at2"/>
<dbReference type="UniPathway" id="UPA00053">
    <property type="reaction ID" value="UER00088"/>
</dbReference>
<dbReference type="Proteomes" id="UP000001383">
    <property type="component" value="Chromosome"/>
</dbReference>
<dbReference type="GO" id="GO:0005829">
    <property type="term" value="C:cytosol"/>
    <property type="evidence" value="ECO:0007669"/>
    <property type="project" value="TreeGrafter"/>
</dbReference>
<dbReference type="GO" id="GO:0005524">
    <property type="term" value="F:ATP binding"/>
    <property type="evidence" value="ECO:0007669"/>
    <property type="project" value="UniProtKB-UniRule"/>
</dbReference>
<dbReference type="GO" id="GO:0000287">
    <property type="term" value="F:magnesium ion binding"/>
    <property type="evidence" value="ECO:0007669"/>
    <property type="project" value="UniProtKB-UniRule"/>
</dbReference>
<dbReference type="GO" id="GO:0004765">
    <property type="term" value="F:shikimate kinase activity"/>
    <property type="evidence" value="ECO:0007669"/>
    <property type="project" value="UniProtKB-UniRule"/>
</dbReference>
<dbReference type="GO" id="GO:0008652">
    <property type="term" value="P:amino acid biosynthetic process"/>
    <property type="evidence" value="ECO:0007669"/>
    <property type="project" value="UniProtKB-KW"/>
</dbReference>
<dbReference type="GO" id="GO:0009073">
    <property type="term" value="P:aromatic amino acid family biosynthetic process"/>
    <property type="evidence" value="ECO:0007669"/>
    <property type="project" value="UniProtKB-KW"/>
</dbReference>
<dbReference type="GO" id="GO:0009423">
    <property type="term" value="P:chorismate biosynthetic process"/>
    <property type="evidence" value="ECO:0007669"/>
    <property type="project" value="UniProtKB-UniRule"/>
</dbReference>
<dbReference type="CDD" id="cd00464">
    <property type="entry name" value="SK"/>
    <property type="match status" value="1"/>
</dbReference>
<dbReference type="Gene3D" id="3.40.50.300">
    <property type="entry name" value="P-loop containing nucleotide triphosphate hydrolases"/>
    <property type="match status" value="1"/>
</dbReference>
<dbReference type="HAMAP" id="MF_00109">
    <property type="entry name" value="Shikimate_kinase"/>
    <property type="match status" value="1"/>
</dbReference>
<dbReference type="InterPro" id="IPR027417">
    <property type="entry name" value="P-loop_NTPase"/>
</dbReference>
<dbReference type="InterPro" id="IPR031322">
    <property type="entry name" value="Shikimate/glucono_kinase"/>
</dbReference>
<dbReference type="InterPro" id="IPR000623">
    <property type="entry name" value="Shikimate_kinase/TSH1"/>
</dbReference>
<dbReference type="InterPro" id="IPR023000">
    <property type="entry name" value="Shikimate_kinase_CS"/>
</dbReference>
<dbReference type="PANTHER" id="PTHR21087">
    <property type="entry name" value="SHIKIMATE KINASE"/>
    <property type="match status" value="1"/>
</dbReference>
<dbReference type="PANTHER" id="PTHR21087:SF16">
    <property type="entry name" value="SHIKIMATE KINASE 1, CHLOROPLASTIC"/>
    <property type="match status" value="1"/>
</dbReference>
<dbReference type="Pfam" id="PF01202">
    <property type="entry name" value="SKI"/>
    <property type="match status" value="1"/>
</dbReference>
<dbReference type="PRINTS" id="PR01100">
    <property type="entry name" value="SHIKIMTKNASE"/>
</dbReference>
<dbReference type="SUPFAM" id="SSF52540">
    <property type="entry name" value="P-loop containing nucleoside triphosphate hydrolases"/>
    <property type="match status" value="1"/>
</dbReference>
<dbReference type="PROSITE" id="PS01128">
    <property type="entry name" value="SHIKIMATE_KINASE"/>
    <property type="match status" value="1"/>
</dbReference>
<proteinExistence type="inferred from homology"/>
<reference key="1">
    <citation type="journal article" date="2009" name="J. Bacteriol.">
        <title>Complete genome sequence of Macrococcus caseolyticus strain JCSCS5402, reflecting the ancestral genome of the human-pathogenic staphylococci.</title>
        <authorList>
            <person name="Baba T."/>
            <person name="Kuwahara-Arai K."/>
            <person name="Uchiyama I."/>
            <person name="Takeuchi F."/>
            <person name="Ito T."/>
            <person name="Hiramatsu K."/>
        </authorList>
    </citation>
    <scope>NUCLEOTIDE SEQUENCE [LARGE SCALE GENOMIC DNA]</scope>
    <source>
        <strain>JCSC5402</strain>
    </source>
</reference>
<name>AROK_MACCJ</name>
<feature type="chain" id="PRO_1000119059" description="Shikimate kinase">
    <location>
        <begin position="1"/>
        <end position="168"/>
    </location>
</feature>
<feature type="binding site" evidence="1">
    <location>
        <begin position="10"/>
        <end position="15"/>
    </location>
    <ligand>
        <name>ATP</name>
        <dbReference type="ChEBI" id="CHEBI:30616"/>
    </ligand>
</feature>
<feature type="binding site" evidence="1">
    <location>
        <position position="14"/>
    </location>
    <ligand>
        <name>Mg(2+)</name>
        <dbReference type="ChEBI" id="CHEBI:18420"/>
    </ligand>
</feature>
<feature type="binding site" evidence="1">
    <location>
        <position position="32"/>
    </location>
    <ligand>
        <name>substrate</name>
    </ligand>
</feature>
<feature type="binding site" evidence="1">
    <location>
        <position position="56"/>
    </location>
    <ligand>
        <name>substrate</name>
    </ligand>
</feature>
<feature type="binding site" evidence="1">
    <location>
        <position position="77"/>
    </location>
    <ligand>
        <name>substrate</name>
    </ligand>
</feature>
<feature type="binding site" evidence="1">
    <location>
        <position position="115"/>
    </location>
    <ligand>
        <name>ATP</name>
        <dbReference type="ChEBI" id="CHEBI:30616"/>
    </ligand>
</feature>
<feature type="binding site" evidence="1">
    <location>
        <position position="133"/>
    </location>
    <ligand>
        <name>substrate</name>
    </ligand>
</feature>
<sequence>MAYVLVGFMGVGKTTIGNLLARKLGLKFIDIDEQIELEMNMKIKDIFEQYGETYFRTLEHNILKQHINMNIVLATGGGIIENPNNISLLKENKINIWVDTNINTVYNRIVNDVNRPNAMNKSFDAIKDLYFRRRSRYNEIAYISVNNDDELSDCVQEIHNFIIAEEGN</sequence>
<evidence type="ECO:0000255" key="1">
    <source>
        <dbReference type="HAMAP-Rule" id="MF_00109"/>
    </source>
</evidence>
<comment type="function">
    <text evidence="1">Catalyzes the specific phosphorylation of the 3-hydroxyl group of shikimic acid using ATP as a cosubstrate.</text>
</comment>
<comment type="catalytic activity">
    <reaction evidence="1">
        <text>shikimate + ATP = 3-phosphoshikimate + ADP + H(+)</text>
        <dbReference type="Rhea" id="RHEA:13121"/>
        <dbReference type="ChEBI" id="CHEBI:15378"/>
        <dbReference type="ChEBI" id="CHEBI:30616"/>
        <dbReference type="ChEBI" id="CHEBI:36208"/>
        <dbReference type="ChEBI" id="CHEBI:145989"/>
        <dbReference type="ChEBI" id="CHEBI:456216"/>
        <dbReference type="EC" id="2.7.1.71"/>
    </reaction>
</comment>
<comment type="cofactor">
    <cofactor evidence="1">
        <name>Mg(2+)</name>
        <dbReference type="ChEBI" id="CHEBI:18420"/>
    </cofactor>
    <text evidence="1">Binds 1 Mg(2+) ion per subunit.</text>
</comment>
<comment type="pathway">
    <text evidence="1">Metabolic intermediate biosynthesis; chorismate biosynthesis; chorismate from D-erythrose 4-phosphate and phosphoenolpyruvate: step 5/7.</text>
</comment>
<comment type="subunit">
    <text evidence="1">Monomer.</text>
</comment>
<comment type="subcellular location">
    <subcellularLocation>
        <location evidence="1">Cytoplasm</location>
    </subcellularLocation>
</comment>
<comment type="similarity">
    <text evidence="1">Belongs to the shikimate kinase family.</text>
</comment>
<accession>B9E6S1</accession>
<gene>
    <name evidence="1" type="primary">aroK</name>
    <name type="ordered locus">MCCL_1182</name>
</gene>
<organism>
    <name type="scientific">Macrococcus caseolyticus (strain JCSC5402)</name>
    <name type="common">Macrococcoides caseolyticum</name>
    <dbReference type="NCBI Taxonomy" id="458233"/>
    <lineage>
        <taxon>Bacteria</taxon>
        <taxon>Bacillati</taxon>
        <taxon>Bacillota</taxon>
        <taxon>Bacilli</taxon>
        <taxon>Bacillales</taxon>
        <taxon>Staphylococcaceae</taxon>
        <taxon>Macrococcoides</taxon>
    </lineage>
</organism>
<keyword id="KW-0028">Amino-acid biosynthesis</keyword>
<keyword id="KW-0057">Aromatic amino acid biosynthesis</keyword>
<keyword id="KW-0067">ATP-binding</keyword>
<keyword id="KW-0963">Cytoplasm</keyword>
<keyword id="KW-0418">Kinase</keyword>
<keyword id="KW-0460">Magnesium</keyword>
<keyword id="KW-0479">Metal-binding</keyword>
<keyword id="KW-0547">Nucleotide-binding</keyword>
<keyword id="KW-1185">Reference proteome</keyword>
<keyword id="KW-0808">Transferase</keyword>